<accession>A8GUQ4</accession>
<feature type="chain" id="PRO_1000101328" description="Glycine--tRNA ligase beta subunit">
    <location>
        <begin position="1"/>
        <end position="658"/>
    </location>
</feature>
<keyword id="KW-0030">Aminoacyl-tRNA synthetase</keyword>
<keyword id="KW-0067">ATP-binding</keyword>
<keyword id="KW-0963">Cytoplasm</keyword>
<keyword id="KW-0436">Ligase</keyword>
<keyword id="KW-0547">Nucleotide-binding</keyword>
<keyword id="KW-0648">Protein biosynthesis</keyword>
<dbReference type="EC" id="6.1.1.14" evidence="1"/>
<dbReference type="EMBL" id="CP000849">
    <property type="protein sequence ID" value="ABV78551.1"/>
    <property type="molecule type" value="Genomic_DNA"/>
</dbReference>
<dbReference type="RefSeq" id="WP_011478009.1">
    <property type="nucleotide sequence ID" value="NC_009883.1"/>
</dbReference>
<dbReference type="SMR" id="A8GUQ4"/>
<dbReference type="KEGG" id="rbo:A1I_00755"/>
<dbReference type="HOGENOM" id="CLU_007220_2_1_5"/>
<dbReference type="GO" id="GO:0005829">
    <property type="term" value="C:cytosol"/>
    <property type="evidence" value="ECO:0007669"/>
    <property type="project" value="TreeGrafter"/>
</dbReference>
<dbReference type="GO" id="GO:0004814">
    <property type="term" value="F:arginine-tRNA ligase activity"/>
    <property type="evidence" value="ECO:0007669"/>
    <property type="project" value="InterPro"/>
</dbReference>
<dbReference type="GO" id="GO:0005524">
    <property type="term" value="F:ATP binding"/>
    <property type="evidence" value="ECO:0007669"/>
    <property type="project" value="UniProtKB-UniRule"/>
</dbReference>
<dbReference type="GO" id="GO:0004820">
    <property type="term" value="F:glycine-tRNA ligase activity"/>
    <property type="evidence" value="ECO:0007669"/>
    <property type="project" value="UniProtKB-UniRule"/>
</dbReference>
<dbReference type="GO" id="GO:0006420">
    <property type="term" value="P:arginyl-tRNA aminoacylation"/>
    <property type="evidence" value="ECO:0007669"/>
    <property type="project" value="InterPro"/>
</dbReference>
<dbReference type="GO" id="GO:0006426">
    <property type="term" value="P:glycyl-tRNA aminoacylation"/>
    <property type="evidence" value="ECO:0007669"/>
    <property type="project" value="UniProtKB-UniRule"/>
</dbReference>
<dbReference type="HAMAP" id="MF_00255">
    <property type="entry name" value="Gly_tRNA_synth_beta"/>
    <property type="match status" value="1"/>
</dbReference>
<dbReference type="InterPro" id="IPR008909">
    <property type="entry name" value="DALR_anticod-bd"/>
</dbReference>
<dbReference type="InterPro" id="IPR015944">
    <property type="entry name" value="Gly-tRNA-synth_bsu"/>
</dbReference>
<dbReference type="InterPro" id="IPR006194">
    <property type="entry name" value="Gly-tRNA-synth_heterodimer"/>
</dbReference>
<dbReference type="NCBIfam" id="TIGR00211">
    <property type="entry name" value="glyS"/>
    <property type="match status" value="1"/>
</dbReference>
<dbReference type="PANTHER" id="PTHR30075:SF2">
    <property type="entry name" value="GLYCINE--TRNA LIGASE, CHLOROPLASTIC_MITOCHONDRIAL 2"/>
    <property type="match status" value="1"/>
</dbReference>
<dbReference type="PANTHER" id="PTHR30075">
    <property type="entry name" value="GLYCYL-TRNA SYNTHETASE"/>
    <property type="match status" value="1"/>
</dbReference>
<dbReference type="Pfam" id="PF05746">
    <property type="entry name" value="DALR_1"/>
    <property type="match status" value="1"/>
</dbReference>
<dbReference type="Pfam" id="PF02092">
    <property type="entry name" value="tRNA_synt_2f"/>
    <property type="match status" value="1"/>
</dbReference>
<dbReference type="PRINTS" id="PR01045">
    <property type="entry name" value="TRNASYNTHGB"/>
</dbReference>
<dbReference type="SUPFAM" id="SSF109604">
    <property type="entry name" value="HD-domain/PDEase-like"/>
    <property type="match status" value="1"/>
</dbReference>
<dbReference type="PROSITE" id="PS50861">
    <property type="entry name" value="AA_TRNA_LIGASE_II_GLYAB"/>
    <property type="match status" value="1"/>
</dbReference>
<proteinExistence type="inferred from homology"/>
<evidence type="ECO:0000255" key="1">
    <source>
        <dbReference type="HAMAP-Rule" id="MF_00255"/>
    </source>
</evidence>
<sequence>MSELLLELFSEEIPAFIQKDAEEGYLSIFTKIFEENEIFAKIQVFSGPRRITLYATHLPKVTLPKEIEIKGPSTEAPEAAINGFCKAHNVSKLELSTKLINNQLYYFYIKKVEERQIKEILPEIIVEAINKYSWAKSMFWGNYNIKWIRPLRNILCIFDSEILPLQFGHLAANNVTFGHRLTDNKKLEVTDFEDYKTKLTENYVILERLKREEIIKTSLLEQANSHNLTIKEDLRLIEEVAGLSEFPVVLCGAIPQKFLELPKEVLISSMRTHQKYFCLFDRSENFAPYFLFVSNGQFANSKLVVQGNEKVLSARLSDALYFYKQDISKTLEANLEKLAAVTFHTKLGSLKEKVERITNICKYIDPDNKDLITAAKLCKSDLVSEMVGEFPELQGIMGYYYAKHENLNEEIAVAIRDHYKPQGLSDSVPVGNAALLAIADKLDSLVGLMIAGEAPTGSGDPYALRRQVLGIIRIIIENKLELNLNSLIDFSLKLYSSDKDKDLIISFFEERAKFYFKNEYDISLINAVLDLNLANIKFKLDALKEFLEKEDGKQLLNAYKRASNILGSQNIDGAVEPSLFNTQPEKELFEVTQKLSLQIVDKDYDKALNLLQTLLTPITSFFDNVLVNDSDPKIAKNRLLILQDVCKLFHKIAKFNRL</sequence>
<gene>
    <name evidence="1" type="primary">glyS</name>
    <name type="ordered locus">A1I_00755</name>
</gene>
<comment type="catalytic activity">
    <reaction evidence="1">
        <text>tRNA(Gly) + glycine + ATP = glycyl-tRNA(Gly) + AMP + diphosphate</text>
        <dbReference type="Rhea" id="RHEA:16013"/>
        <dbReference type="Rhea" id="RHEA-COMP:9664"/>
        <dbReference type="Rhea" id="RHEA-COMP:9683"/>
        <dbReference type="ChEBI" id="CHEBI:30616"/>
        <dbReference type="ChEBI" id="CHEBI:33019"/>
        <dbReference type="ChEBI" id="CHEBI:57305"/>
        <dbReference type="ChEBI" id="CHEBI:78442"/>
        <dbReference type="ChEBI" id="CHEBI:78522"/>
        <dbReference type="ChEBI" id="CHEBI:456215"/>
        <dbReference type="EC" id="6.1.1.14"/>
    </reaction>
</comment>
<comment type="subunit">
    <text evidence="1">Tetramer of two alpha and two beta subunits.</text>
</comment>
<comment type="subcellular location">
    <subcellularLocation>
        <location evidence="1">Cytoplasm</location>
    </subcellularLocation>
</comment>
<comment type="similarity">
    <text evidence="1">Belongs to the class-II aminoacyl-tRNA synthetase family.</text>
</comment>
<organism>
    <name type="scientific">Rickettsia bellii (strain OSU 85-389)</name>
    <dbReference type="NCBI Taxonomy" id="391896"/>
    <lineage>
        <taxon>Bacteria</taxon>
        <taxon>Pseudomonadati</taxon>
        <taxon>Pseudomonadota</taxon>
        <taxon>Alphaproteobacteria</taxon>
        <taxon>Rickettsiales</taxon>
        <taxon>Rickettsiaceae</taxon>
        <taxon>Rickettsieae</taxon>
        <taxon>Rickettsia</taxon>
        <taxon>belli group</taxon>
    </lineage>
</organism>
<name>SYGB_RICB8</name>
<reference key="1">
    <citation type="submission" date="2007-09" db="EMBL/GenBank/DDBJ databases">
        <title>Complete genome sequencing of Rickettsia bellii.</title>
        <authorList>
            <person name="Madan A."/>
            <person name="Lee H."/>
            <person name="Madan A."/>
            <person name="Yoon J.-G."/>
            <person name="Ryu G.-Y."/>
            <person name="Dasch G."/>
            <person name="Ereemeva M."/>
        </authorList>
    </citation>
    <scope>NUCLEOTIDE SEQUENCE [LARGE SCALE GENOMIC DNA]</scope>
    <source>
        <strain>OSU 85-389</strain>
    </source>
</reference>
<protein>
    <recommendedName>
        <fullName evidence="1">Glycine--tRNA ligase beta subunit</fullName>
        <ecNumber evidence="1">6.1.1.14</ecNumber>
    </recommendedName>
    <alternativeName>
        <fullName evidence="1">Glycyl-tRNA synthetase beta subunit</fullName>
        <shortName evidence="1">GlyRS</shortName>
    </alternativeName>
</protein>